<dbReference type="EC" id="2.7.11.34" evidence="13 16 19"/>
<dbReference type="EMBL" id="AB062450">
    <property type="protein sequence ID" value="BAB85632.1"/>
    <property type="molecule type" value="mRNA"/>
</dbReference>
<dbReference type="EMBL" id="CK819069">
    <property type="status" value="NOT_ANNOTATED_CDS"/>
    <property type="molecule type" value="mRNA"/>
</dbReference>
<dbReference type="EMBL" id="AC093419">
    <property type="status" value="NOT_ANNOTATED_CDS"/>
    <property type="molecule type" value="Genomic_DNA"/>
</dbReference>
<dbReference type="EMBL" id="AC093561">
    <property type="status" value="NOT_ANNOTATED_CDS"/>
    <property type="molecule type" value="Genomic_DNA"/>
</dbReference>
<dbReference type="EMBL" id="CH471067">
    <property type="protein sequence ID" value="EAW91294.1"/>
    <property type="molecule type" value="Genomic_DNA"/>
</dbReference>
<dbReference type="CCDS" id="CCDS1394.1">
    <molecule id="Q8TDX7-1"/>
</dbReference>
<dbReference type="RefSeq" id="NP_598001.1">
    <molecule id="Q8TDX7-1"/>
    <property type="nucleotide sequence ID" value="NM_133494.3"/>
</dbReference>
<dbReference type="RefSeq" id="XP_047302518.1">
    <molecule id="Q8TDX7-1"/>
    <property type="nucleotide sequence ID" value="XM_047446562.1"/>
</dbReference>
<dbReference type="RefSeq" id="XP_047302519.1">
    <molecule id="Q8TDX7-1"/>
    <property type="nucleotide sequence ID" value="XM_047446563.1"/>
</dbReference>
<dbReference type="RefSeq" id="XP_047302520.1">
    <molecule id="Q8TDX7-1"/>
    <property type="nucleotide sequence ID" value="XM_047446564.1"/>
</dbReference>
<dbReference type="RefSeq" id="XP_054190473.1">
    <molecule id="Q8TDX7-1"/>
    <property type="nucleotide sequence ID" value="XM_054334498.1"/>
</dbReference>
<dbReference type="RefSeq" id="XP_054190474.1">
    <molecule id="Q8TDX7-1"/>
    <property type="nucleotide sequence ID" value="XM_054334499.1"/>
</dbReference>
<dbReference type="RefSeq" id="XP_054190475.1">
    <molecule id="Q8TDX7-1"/>
    <property type="nucleotide sequence ID" value="XM_054334500.1"/>
</dbReference>
<dbReference type="PDB" id="2WQM">
    <property type="method" value="X-ray"/>
    <property type="resolution" value="2.10 A"/>
    <property type="chains" value="A=1-302"/>
</dbReference>
<dbReference type="PDB" id="2WQN">
    <property type="method" value="X-ray"/>
    <property type="resolution" value="2.30 A"/>
    <property type="chains" value="A=1-302"/>
</dbReference>
<dbReference type="PDB" id="5DE2">
    <property type="method" value="X-ray"/>
    <property type="resolution" value="2.78 A"/>
    <property type="chains" value="A/B=1-302"/>
</dbReference>
<dbReference type="PDB" id="6NPY">
    <property type="method" value="EM"/>
    <property type="resolution" value="3.80 A"/>
    <property type="chains" value="B=1-302"/>
</dbReference>
<dbReference type="PDB" id="6S73">
    <property type="method" value="X-ray"/>
    <property type="resolution" value="3.50 A"/>
    <property type="chains" value="A/B/C/D=1-302"/>
</dbReference>
<dbReference type="PDB" id="6S75">
    <property type="method" value="X-ray"/>
    <property type="resolution" value="3.30 A"/>
    <property type="chains" value="A/B/C/D=1-302"/>
</dbReference>
<dbReference type="PDB" id="6S76">
    <property type="method" value="X-ray"/>
    <property type="resolution" value="3.38 A"/>
    <property type="chains" value="A/B/C/D=1-302"/>
</dbReference>
<dbReference type="PDB" id="8EJ4">
    <property type="method" value="EM"/>
    <property type="resolution" value="3.40 A"/>
    <property type="chains" value="K/L/M/N/O/P/Q/R/S/T=20-297"/>
</dbReference>
<dbReference type="PDB" id="8SXN">
    <property type="method" value="EM"/>
    <property type="resolution" value="4.04 A"/>
    <property type="chains" value="A/B=1-302"/>
</dbReference>
<dbReference type="PDBsum" id="2WQM"/>
<dbReference type="PDBsum" id="2WQN"/>
<dbReference type="PDBsum" id="5DE2"/>
<dbReference type="PDBsum" id="6NPY"/>
<dbReference type="PDBsum" id="6S73"/>
<dbReference type="PDBsum" id="6S75"/>
<dbReference type="PDBsum" id="6S76"/>
<dbReference type="PDBsum" id="8EJ4"/>
<dbReference type="PDBsum" id="8SXN"/>
<dbReference type="EMDB" id="EMD-0476"/>
<dbReference type="EMDB" id="EMD-28175"/>
<dbReference type="EMDB" id="EMD-40855"/>
<dbReference type="SMR" id="Q8TDX7"/>
<dbReference type="BioGRID" id="126636">
    <property type="interactions" value="168"/>
</dbReference>
<dbReference type="CORUM" id="Q8TDX7"/>
<dbReference type="DIP" id="DIP-50780N"/>
<dbReference type="FunCoup" id="Q8TDX7">
    <property type="interactions" value="2989"/>
</dbReference>
<dbReference type="IntAct" id="Q8TDX7">
    <property type="interactions" value="197"/>
</dbReference>
<dbReference type="MINT" id="Q8TDX7"/>
<dbReference type="STRING" id="9606.ENSP00000356355"/>
<dbReference type="BindingDB" id="Q8TDX7"/>
<dbReference type="ChEMBL" id="CHEMBL4849"/>
<dbReference type="DrugCentral" id="Q8TDX7"/>
<dbReference type="GuidetoPHARMACOLOGY" id="2122"/>
<dbReference type="TCDB" id="1.I.1.1.3">
    <property type="family name" value="the nuclear pore complex (npc) family"/>
</dbReference>
<dbReference type="GlyCosmos" id="Q8TDX7">
    <property type="glycosylation" value="2 sites, 1 glycan"/>
</dbReference>
<dbReference type="GlyGen" id="Q8TDX7">
    <property type="glycosylation" value="2 sites, 1 O-linked glycan (2 sites)"/>
</dbReference>
<dbReference type="iPTMnet" id="Q8TDX7"/>
<dbReference type="MetOSite" id="Q8TDX7"/>
<dbReference type="PhosphoSitePlus" id="Q8TDX7"/>
<dbReference type="BioMuta" id="NEK7"/>
<dbReference type="DMDM" id="37537965"/>
<dbReference type="CPTAC" id="CPTAC-1621"/>
<dbReference type="CPTAC" id="non-CPTAC-5680"/>
<dbReference type="jPOST" id="Q8TDX7"/>
<dbReference type="MassIVE" id="Q8TDX7"/>
<dbReference type="PaxDb" id="9606-ENSP00000356355"/>
<dbReference type="PeptideAtlas" id="Q8TDX7"/>
<dbReference type="ProteomicsDB" id="74364">
    <molecule id="Q8TDX7-1"/>
</dbReference>
<dbReference type="ProteomicsDB" id="74365">
    <molecule id="Q8TDX7-2"/>
</dbReference>
<dbReference type="Pumba" id="Q8TDX7"/>
<dbReference type="Antibodypedia" id="20630">
    <property type="antibodies" value="368 antibodies from 36 providers"/>
</dbReference>
<dbReference type="DNASU" id="140609"/>
<dbReference type="Ensembl" id="ENST00000367383.5">
    <molecule id="Q8TDX7-2"/>
    <property type="protein sequence ID" value="ENSP00000356353.1"/>
    <property type="gene ID" value="ENSG00000151414.15"/>
</dbReference>
<dbReference type="Ensembl" id="ENST00000367385.9">
    <molecule id="Q8TDX7-1"/>
    <property type="protein sequence ID" value="ENSP00000356355.4"/>
    <property type="gene ID" value="ENSG00000151414.15"/>
</dbReference>
<dbReference type="Ensembl" id="ENST00000538004.5">
    <molecule id="Q8TDX7-1"/>
    <property type="protein sequence ID" value="ENSP00000444621.1"/>
    <property type="gene ID" value="ENSG00000151414.15"/>
</dbReference>
<dbReference type="GeneID" id="140609"/>
<dbReference type="KEGG" id="hsa:140609"/>
<dbReference type="MANE-Select" id="ENST00000367385.9">
    <property type="protein sequence ID" value="ENSP00000356355.4"/>
    <property type="RefSeq nucleotide sequence ID" value="NM_133494.3"/>
    <property type="RefSeq protein sequence ID" value="NP_598001.1"/>
</dbReference>
<dbReference type="UCSC" id="uc001gun.5">
    <molecule id="Q8TDX7-1"/>
    <property type="organism name" value="human"/>
</dbReference>
<dbReference type="AGR" id="HGNC:13386"/>
<dbReference type="CTD" id="140609"/>
<dbReference type="DisGeNET" id="140609"/>
<dbReference type="GeneCards" id="NEK7"/>
<dbReference type="HGNC" id="HGNC:13386">
    <property type="gene designation" value="NEK7"/>
</dbReference>
<dbReference type="HPA" id="ENSG00000151414">
    <property type="expression patterns" value="Tissue enhanced (heart)"/>
</dbReference>
<dbReference type="MIM" id="606848">
    <property type="type" value="gene"/>
</dbReference>
<dbReference type="neXtProt" id="NX_Q8TDX7"/>
<dbReference type="OpenTargets" id="ENSG00000151414"/>
<dbReference type="PharmGKB" id="PA31551"/>
<dbReference type="VEuPathDB" id="HostDB:ENSG00000151414"/>
<dbReference type="eggNOG" id="KOG0591">
    <property type="taxonomic scope" value="Eukaryota"/>
</dbReference>
<dbReference type="GeneTree" id="ENSGT00940000156725"/>
<dbReference type="HOGENOM" id="CLU_000288_63_23_1"/>
<dbReference type="InParanoid" id="Q8TDX7"/>
<dbReference type="OMA" id="SEQMNAH"/>
<dbReference type="OrthoDB" id="248923at2759"/>
<dbReference type="PAN-GO" id="Q8TDX7">
    <property type="GO annotations" value="4 GO annotations based on evolutionary models"/>
</dbReference>
<dbReference type="PhylomeDB" id="Q8TDX7"/>
<dbReference type="TreeFam" id="TF105135"/>
<dbReference type="PathwayCommons" id="Q8TDX7"/>
<dbReference type="Reactome" id="R-HSA-2980767">
    <property type="pathway name" value="Activation of NIMA Kinases NEK9, NEK6, NEK7"/>
</dbReference>
<dbReference type="Reactome" id="R-HSA-3301854">
    <property type="pathway name" value="Nuclear Pore Complex (NPC) Disassembly"/>
</dbReference>
<dbReference type="Reactome" id="R-HSA-9648025">
    <property type="pathway name" value="EML4 and NUDC in mitotic spindle formation"/>
</dbReference>
<dbReference type="SignaLink" id="Q8TDX7"/>
<dbReference type="SIGNOR" id="Q8TDX7"/>
<dbReference type="BioGRID-ORCS" id="140609">
    <property type="hits" value="18 hits in 1194 CRISPR screens"/>
</dbReference>
<dbReference type="CD-CODE" id="8C2F96ED">
    <property type="entry name" value="Centrosome"/>
</dbReference>
<dbReference type="ChiTaRS" id="NEK7">
    <property type="organism name" value="human"/>
</dbReference>
<dbReference type="EvolutionaryTrace" id="Q8TDX7"/>
<dbReference type="GenomeRNAi" id="140609"/>
<dbReference type="Pharos" id="Q8TDX7">
    <property type="development level" value="Tchem"/>
</dbReference>
<dbReference type="PRO" id="PR:Q8TDX7"/>
<dbReference type="Proteomes" id="UP000005640">
    <property type="component" value="Chromosome 1"/>
</dbReference>
<dbReference type="RNAct" id="Q8TDX7">
    <property type="molecule type" value="protein"/>
</dbReference>
<dbReference type="Bgee" id="ENSG00000151414">
    <property type="expression patterns" value="Expressed in heart right ventricle and 208 other cell types or tissues"/>
</dbReference>
<dbReference type="ExpressionAtlas" id="Q8TDX7">
    <property type="expression patterns" value="baseline and differential"/>
</dbReference>
<dbReference type="GO" id="GO:0005813">
    <property type="term" value="C:centrosome"/>
    <property type="evidence" value="ECO:0007669"/>
    <property type="project" value="UniProtKB-SubCell"/>
</dbReference>
<dbReference type="GO" id="GO:0005737">
    <property type="term" value="C:cytoplasm"/>
    <property type="evidence" value="ECO:0000250"/>
    <property type="project" value="UniProtKB"/>
</dbReference>
<dbReference type="GO" id="GO:0005874">
    <property type="term" value="C:microtubule"/>
    <property type="evidence" value="ECO:0007669"/>
    <property type="project" value="UniProtKB-KW"/>
</dbReference>
<dbReference type="GO" id="GO:0005815">
    <property type="term" value="C:microtubule organizing center"/>
    <property type="evidence" value="ECO:0000314"/>
    <property type="project" value="UniProt"/>
</dbReference>
<dbReference type="GO" id="GO:0005654">
    <property type="term" value="C:nucleoplasm"/>
    <property type="evidence" value="ECO:0000314"/>
    <property type="project" value="HPA"/>
</dbReference>
<dbReference type="GO" id="GO:0005634">
    <property type="term" value="C:nucleus"/>
    <property type="evidence" value="ECO:0000318"/>
    <property type="project" value="GO_Central"/>
</dbReference>
<dbReference type="GO" id="GO:0000922">
    <property type="term" value="C:spindle pole"/>
    <property type="evidence" value="ECO:0007669"/>
    <property type="project" value="UniProtKB-SubCell"/>
</dbReference>
<dbReference type="GO" id="GO:0005524">
    <property type="term" value="F:ATP binding"/>
    <property type="evidence" value="ECO:0007669"/>
    <property type="project" value="UniProtKB-KW"/>
</dbReference>
<dbReference type="GO" id="GO:0046872">
    <property type="term" value="F:metal ion binding"/>
    <property type="evidence" value="ECO:0007669"/>
    <property type="project" value="UniProtKB-KW"/>
</dbReference>
<dbReference type="GO" id="GO:0140677">
    <property type="term" value="F:molecular function activator activity"/>
    <property type="evidence" value="ECO:0000314"/>
    <property type="project" value="UniProtKB"/>
</dbReference>
<dbReference type="GO" id="GO:0106310">
    <property type="term" value="F:protein serine kinase activity"/>
    <property type="evidence" value="ECO:0007669"/>
    <property type="project" value="RHEA"/>
</dbReference>
<dbReference type="GO" id="GO:0004674">
    <property type="term" value="F:protein serine/threonine kinase activity"/>
    <property type="evidence" value="ECO:0000314"/>
    <property type="project" value="UniProtKB"/>
</dbReference>
<dbReference type="GO" id="GO:0035865">
    <property type="term" value="P:cellular response to potassium ion"/>
    <property type="evidence" value="ECO:0000250"/>
    <property type="project" value="UniProtKB"/>
</dbReference>
<dbReference type="GO" id="GO:1900227">
    <property type="term" value="P:positive regulation of NLRP3 inflammasome complex assembly"/>
    <property type="evidence" value="ECO:0000314"/>
    <property type="project" value="UniProtKB"/>
</dbReference>
<dbReference type="GO" id="GO:0032206">
    <property type="term" value="P:positive regulation of telomere maintenance"/>
    <property type="evidence" value="ECO:0000315"/>
    <property type="project" value="BHF-UCL"/>
</dbReference>
<dbReference type="GO" id="GO:0006468">
    <property type="term" value="P:protein phosphorylation"/>
    <property type="evidence" value="ECO:0000314"/>
    <property type="project" value="UniProtKB"/>
</dbReference>
<dbReference type="GO" id="GO:0007346">
    <property type="term" value="P:regulation of mitotic cell cycle"/>
    <property type="evidence" value="ECO:0000314"/>
    <property type="project" value="UniProtKB"/>
</dbReference>
<dbReference type="GO" id="GO:0051225">
    <property type="term" value="P:spindle assembly"/>
    <property type="evidence" value="ECO:0000304"/>
    <property type="project" value="UniProtKB"/>
</dbReference>
<dbReference type="CDD" id="cd08224">
    <property type="entry name" value="STKc_Nek6_7"/>
    <property type="match status" value="1"/>
</dbReference>
<dbReference type="FunFam" id="1.10.510.10:FF:000148">
    <property type="entry name" value="Serine/threonine-protein kinase Nek7"/>
    <property type="match status" value="1"/>
</dbReference>
<dbReference type="FunFam" id="3.30.200.20:FF:000204">
    <property type="entry name" value="Serine/threonine-protein kinase Nek7"/>
    <property type="match status" value="1"/>
</dbReference>
<dbReference type="FunFam" id="3.30.200.20:FF:000240">
    <property type="entry name" value="Serine/threonine-protein kinase Nek7"/>
    <property type="match status" value="1"/>
</dbReference>
<dbReference type="Gene3D" id="3.30.200.20">
    <property type="entry name" value="Phosphorylase Kinase, domain 1"/>
    <property type="match status" value="2"/>
</dbReference>
<dbReference type="Gene3D" id="1.10.510.10">
    <property type="entry name" value="Transferase(Phosphotransferase) domain 1"/>
    <property type="match status" value="1"/>
</dbReference>
<dbReference type="InterPro" id="IPR011009">
    <property type="entry name" value="Kinase-like_dom_sf"/>
</dbReference>
<dbReference type="InterPro" id="IPR000719">
    <property type="entry name" value="Prot_kinase_dom"/>
</dbReference>
<dbReference type="InterPro" id="IPR017441">
    <property type="entry name" value="Protein_kinase_ATP_BS"/>
</dbReference>
<dbReference type="InterPro" id="IPR001245">
    <property type="entry name" value="Ser-Thr/Tyr_kinase_cat_dom"/>
</dbReference>
<dbReference type="InterPro" id="IPR008271">
    <property type="entry name" value="Ser/Thr_kinase_AS"/>
</dbReference>
<dbReference type="PANTHER" id="PTHR43289">
    <property type="entry name" value="MITOGEN-ACTIVATED PROTEIN KINASE KINASE KINASE 20-RELATED"/>
    <property type="match status" value="1"/>
</dbReference>
<dbReference type="PANTHER" id="PTHR43289:SF2">
    <property type="entry name" value="SERINE_THREONINE-PROTEIN KINASE NEK7"/>
    <property type="match status" value="1"/>
</dbReference>
<dbReference type="Pfam" id="PF00069">
    <property type="entry name" value="Pkinase"/>
    <property type="match status" value="1"/>
</dbReference>
<dbReference type="PIRSF" id="PIRSF000654">
    <property type="entry name" value="Integrin-linked_kinase"/>
    <property type="match status" value="1"/>
</dbReference>
<dbReference type="PRINTS" id="PR00109">
    <property type="entry name" value="TYRKINASE"/>
</dbReference>
<dbReference type="SMART" id="SM00220">
    <property type="entry name" value="S_TKc"/>
    <property type="match status" value="1"/>
</dbReference>
<dbReference type="SUPFAM" id="SSF56112">
    <property type="entry name" value="Protein kinase-like (PK-like)"/>
    <property type="match status" value="1"/>
</dbReference>
<dbReference type="PROSITE" id="PS00107">
    <property type="entry name" value="PROTEIN_KINASE_ATP"/>
    <property type="match status" value="1"/>
</dbReference>
<dbReference type="PROSITE" id="PS50011">
    <property type="entry name" value="PROTEIN_KINASE_DOM"/>
    <property type="match status" value="1"/>
</dbReference>
<dbReference type="PROSITE" id="PS00108">
    <property type="entry name" value="PROTEIN_KINASE_ST"/>
    <property type="match status" value="1"/>
</dbReference>
<proteinExistence type="evidence at protein level"/>
<evidence type="ECO:0000250" key="1">
    <source>
        <dbReference type="UniProtKB" id="D3ZBE5"/>
    </source>
</evidence>
<evidence type="ECO:0000250" key="2">
    <source>
        <dbReference type="UniProtKB" id="Q8TD19"/>
    </source>
</evidence>
<evidence type="ECO:0000250" key="3">
    <source>
        <dbReference type="UniProtKB" id="Q9ES74"/>
    </source>
</evidence>
<evidence type="ECO:0000255" key="4">
    <source>
        <dbReference type="PROSITE-ProRule" id="PRU00159"/>
    </source>
</evidence>
<evidence type="ECO:0000255" key="5">
    <source>
        <dbReference type="PROSITE-ProRule" id="PRU10027"/>
    </source>
</evidence>
<evidence type="ECO:0000256" key="6">
    <source>
        <dbReference type="SAM" id="MobiDB-lite"/>
    </source>
</evidence>
<evidence type="ECO:0000269" key="7">
    <source>
    </source>
</evidence>
<evidence type="ECO:0000269" key="8">
    <source>
    </source>
</evidence>
<evidence type="ECO:0000269" key="9">
    <source>
    </source>
</evidence>
<evidence type="ECO:0000269" key="10">
    <source>
    </source>
</evidence>
<evidence type="ECO:0000269" key="11">
    <source>
    </source>
</evidence>
<evidence type="ECO:0000269" key="12">
    <source>
    </source>
</evidence>
<evidence type="ECO:0000269" key="13">
    <source>
    </source>
</evidence>
<evidence type="ECO:0000269" key="14">
    <source>
    </source>
</evidence>
<evidence type="ECO:0000269" key="15">
    <source>
    </source>
</evidence>
<evidence type="ECO:0000269" key="16">
    <source>
    </source>
</evidence>
<evidence type="ECO:0000269" key="17">
    <source>
    </source>
</evidence>
<evidence type="ECO:0000269" key="18">
    <source>
    </source>
</evidence>
<evidence type="ECO:0000269" key="19">
    <source>
    </source>
</evidence>
<evidence type="ECO:0000269" key="20">
    <source>
    </source>
</evidence>
<evidence type="ECO:0000269" key="21">
    <source>
    </source>
</evidence>
<evidence type="ECO:0000303" key="22">
    <source>
    </source>
</evidence>
<evidence type="ECO:0000303" key="23">
    <source ref="2"/>
</evidence>
<evidence type="ECO:0000305" key="24"/>
<evidence type="ECO:0000305" key="25">
    <source>
    </source>
</evidence>
<evidence type="ECO:0000305" key="26">
    <source>
    </source>
</evidence>
<evidence type="ECO:0000312" key="27">
    <source>
        <dbReference type="HGNC" id="HGNC:13386"/>
    </source>
</evidence>
<evidence type="ECO:0007744" key="28">
    <source>
        <dbReference type="PDB" id="2WQN"/>
    </source>
</evidence>
<evidence type="ECO:0007744" key="29">
    <source>
        <dbReference type="PDB" id="5DE2"/>
    </source>
</evidence>
<evidence type="ECO:0007744" key="30">
    <source>
        <dbReference type="PDB" id="6NPY"/>
    </source>
</evidence>
<evidence type="ECO:0007744" key="31">
    <source>
    </source>
</evidence>
<evidence type="ECO:0007744" key="32">
    <source>
    </source>
</evidence>
<evidence type="ECO:0007829" key="33">
    <source>
        <dbReference type="PDB" id="2WQM"/>
    </source>
</evidence>
<evidence type="ECO:0007829" key="34">
    <source>
        <dbReference type="PDB" id="2WQN"/>
    </source>
</evidence>
<evidence type="ECO:0007829" key="35">
    <source>
        <dbReference type="PDB" id="6S73"/>
    </source>
</evidence>
<evidence type="ECO:0007829" key="36">
    <source>
        <dbReference type="PDB" id="6S75"/>
    </source>
</evidence>
<evidence type="ECO:0007829" key="37">
    <source>
        <dbReference type="PDB" id="6S76"/>
    </source>
</evidence>
<comment type="function">
    <text evidence="1 9 11 12 13 16 17 18 19 20 21">Protein kinase which plays an important role in mitotic cell cycle progression (PubMed:17101132, PubMed:19941817, PubMed:31409757). Required for microtubule nucleation activity of the centrosome, robust mitotic spindle formation and cytokinesis (PubMed:17586473, PubMed:19414596, PubMed:19941817, PubMed:26522158, PubMed:31409757). Phosphorylates EML4 at 'Ser-146', promoting its dissociation from microtubules during mitosis which is required for efficient chromosome congression (PubMed:31409757). Phosphorylates RPS6KB1 (By similarity). Acts as an essential activator of the NLRP3 inflammasome assembly independently of its kinase activity (PubMed:26642356, PubMed:36442502, PubMed:39173637). Acts by unlocking NLRP3 following NLRP3 tranlocation into the microtubule organizing center (MTOC), relieving NLRP3 autoinhibition and promoting formation of the NLRP3:PYCARD complex, and activation of CASP1 (PubMed:26642356, PubMed:31189953, PubMed:36442502, PubMed:39173637). Serves as a cellular switch that enforces mutual exclusivity of the inflammasome response and cell division: interaction with NEK9 prevents interaction with NLRP3 and activation of the inflammasome during mitosis (PubMed:26642356, PubMed:31189953).</text>
</comment>
<comment type="catalytic activity">
    <reaction evidence="13 16 19">
        <text>L-seryl-[protein] + ATP = O-phospho-L-seryl-[protein] + ADP + H(+)</text>
        <dbReference type="Rhea" id="RHEA:17989"/>
        <dbReference type="Rhea" id="RHEA-COMP:9863"/>
        <dbReference type="Rhea" id="RHEA-COMP:11604"/>
        <dbReference type="ChEBI" id="CHEBI:15378"/>
        <dbReference type="ChEBI" id="CHEBI:29999"/>
        <dbReference type="ChEBI" id="CHEBI:30616"/>
        <dbReference type="ChEBI" id="CHEBI:83421"/>
        <dbReference type="ChEBI" id="CHEBI:456216"/>
        <dbReference type="EC" id="2.7.11.34"/>
    </reaction>
    <physiologicalReaction direction="left-to-right" evidence="13 16 19">
        <dbReference type="Rhea" id="RHEA:17990"/>
    </physiologicalReaction>
</comment>
<comment type="catalytic activity">
    <reaction evidence="13 16">
        <text>L-threonyl-[protein] + ATP = O-phospho-L-threonyl-[protein] + ADP + H(+)</text>
        <dbReference type="Rhea" id="RHEA:46608"/>
        <dbReference type="Rhea" id="RHEA-COMP:11060"/>
        <dbReference type="Rhea" id="RHEA-COMP:11605"/>
        <dbReference type="ChEBI" id="CHEBI:15378"/>
        <dbReference type="ChEBI" id="CHEBI:30013"/>
        <dbReference type="ChEBI" id="CHEBI:30616"/>
        <dbReference type="ChEBI" id="CHEBI:61977"/>
        <dbReference type="ChEBI" id="CHEBI:456216"/>
        <dbReference type="EC" id="2.7.11.34"/>
    </reaction>
    <physiologicalReaction direction="left-to-right" evidence="13 16">
        <dbReference type="Rhea" id="RHEA:46609"/>
    </physiologicalReaction>
</comment>
<comment type="cofactor">
    <cofactor evidence="2">
        <name>Mg(2+)</name>
        <dbReference type="ChEBI" id="CHEBI:18420"/>
    </cofactor>
</comment>
<comment type="activity regulation">
    <text evidence="13 16">Binding to NEK9 stimulates its activity by releasing the autoinhibitory function of Tyr-97.</text>
</comment>
<comment type="subunit">
    <text evidence="12 13 14 15 18 20">Monomer (PubMed:21320329). Interacts with NEK9; interaction takes place during mitosis; it relieves NEK7 autoinhibition and prevents interaction with NLRP3 (PubMed:19414596, PubMed:19941817, PubMed:26522158). Interacts with ANKS3; this interaction alters the subcellular distribution of NEK7 by preventing its nuclear translocation (PubMed:26188091). Interacts (via N-terminus) with NLRP3 (via LRR repeat domain); the interaction is required for the formation of the complex NLRP3:PYCARD, oligomerization of PYCARD and activation of CASP1 (PubMed:31189953, PubMed:36442502).</text>
</comment>
<comment type="interaction">
    <interactant intactId="EBI-1055945">
        <id>Q8TDX7</id>
    </interactant>
    <interactant intactId="EBI-13062134">
        <id>Q8N1W1-4</id>
        <label>ARHGEF28</label>
    </interactant>
    <organismsDiffer>false</organismsDiffer>
    <experiments>3</experiments>
</comment>
<comment type="interaction">
    <interactant intactId="EBI-1055945">
        <id>Q8TDX7</id>
    </interactant>
    <interactant intactId="EBI-747505">
        <id>Q8TAB5</id>
        <label>C1orf216</label>
    </interactant>
    <organismsDiffer>false</organismsDiffer>
    <experiments>3</experiments>
</comment>
<comment type="interaction">
    <interactant intactId="EBI-1055945">
        <id>Q8TDX7</id>
    </interactant>
    <interactant intactId="EBI-10176008">
        <id>O94983-5</id>
        <label>CAMTA2</label>
    </interactant>
    <organismsDiffer>false</organismsDiffer>
    <experiments>3</experiments>
</comment>
<comment type="interaction">
    <interactant intactId="EBI-1055945">
        <id>Q8TDX7</id>
    </interactant>
    <interactant intactId="EBI-743073">
        <id>O75175</id>
        <label>CNOT3</label>
    </interactant>
    <organismsDiffer>false</organismsDiffer>
    <experiments>3</experiments>
</comment>
<comment type="interaction">
    <interactant intactId="EBI-1055945">
        <id>Q8TDX7</id>
    </interactant>
    <interactant intactId="EBI-21670927">
        <id>Q6UXH1-2</id>
        <label>CRELD2</label>
    </interactant>
    <organismsDiffer>false</organismsDiffer>
    <experiments>3</experiments>
</comment>
<comment type="interaction">
    <interactant intactId="EBI-1055945">
        <id>Q8TDX7</id>
    </interactant>
    <interactant intactId="EBI-742054">
        <id>Q96D03</id>
        <label>DDIT4L</label>
    </interactant>
    <organismsDiffer>false</organismsDiffer>
    <experiments>3</experiments>
</comment>
<comment type="interaction">
    <interactant intactId="EBI-1055945">
        <id>Q8TDX7</id>
    </interactant>
    <interactant intactId="EBI-20894690">
        <id>P49184</id>
        <label>DNASE1L1</label>
    </interactant>
    <organismsDiffer>false</organismsDiffer>
    <experiments>3</experiments>
</comment>
<comment type="interaction">
    <interactant intactId="EBI-1055945">
        <id>Q8TDX7</id>
    </interactant>
    <interactant intactId="EBI-10262896">
        <id>Q8IY82</id>
        <label>DRC7</label>
    </interactant>
    <organismsDiffer>false</organismsDiffer>
    <experiments>3</experiments>
</comment>
<comment type="interaction">
    <interactant intactId="EBI-1055945">
        <id>Q8TDX7</id>
    </interactant>
    <interactant intactId="EBI-3924130">
        <id>Q99944</id>
        <label>EGFL8</label>
    </interactant>
    <organismsDiffer>false</organismsDiffer>
    <experiments>3</experiments>
</comment>
<comment type="interaction">
    <interactant intactId="EBI-1055945">
        <id>Q8TDX7</id>
    </interactant>
    <interactant intactId="EBI-1171184">
        <id>P16422</id>
        <label>EPCAM</label>
    </interactant>
    <organismsDiffer>false</organismsDiffer>
    <experiments>3</experiments>
</comment>
<comment type="interaction">
    <interactant intactId="EBI-1055945">
        <id>Q8TDX7</id>
    </interactant>
    <interactant intactId="EBI-10314666">
        <id>Q9NVM1</id>
        <label>EVA1B</label>
    </interactant>
    <organismsDiffer>false</organismsDiffer>
    <experiments>3</experiments>
</comment>
<comment type="interaction">
    <interactant intactId="EBI-1055945">
        <id>Q8TDX7</id>
    </interactant>
    <interactant intactId="EBI-21647872">
        <id>Q96GK7</id>
        <label>FAHD2A</label>
    </interactant>
    <organismsDiffer>false</organismsDiffer>
    <experiments>3</experiments>
</comment>
<comment type="interaction">
    <interactant intactId="EBI-1055945">
        <id>Q8TDX7</id>
    </interactant>
    <interactant intactId="EBI-9090702">
        <id>Q10981</id>
        <label>FUT2</label>
    </interactant>
    <organismsDiffer>false</organismsDiffer>
    <experiments>3</experiments>
</comment>
<comment type="interaction">
    <interactant intactId="EBI-1055945">
        <id>Q8TDX7</id>
    </interactant>
    <interactant intactId="EBI-750433">
        <id>P36382</id>
        <label>GJA5</label>
    </interactant>
    <organismsDiffer>false</organismsDiffer>
    <experiments>3</experiments>
</comment>
<comment type="interaction">
    <interactant intactId="EBI-1055945">
        <id>Q8TDX7</id>
    </interactant>
    <interactant intactId="EBI-715087">
        <id>P09471</id>
        <label>GNAO1</label>
    </interactant>
    <organismsDiffer>false</organismsDiffer>
    <experiments>3</experiments>
</comment>
<comment type="interaction">
    <interactant intactId="EBI-1055945">
        <id>Q8TDX7</id>
    </interactant>
    <interactant intactId="EBI-3910269">
        <id>P79483</id>
        <label>HLA-DRB3</label>
    </interactant>
    <organismsDiffer>false</organismsDiffer>
    <experiments>3</experiments>
</comment>
<comment type="interaction">
    <interactant intactId="EBI-1055945">
        <id>Q8TDX7</id>
    </interactant>
    <interactant intactId="EBI-17426018">
        <id>P14060</id>
        <label>HSD3B1</label>
    </interactant>
    <organismsDiffer>false</organismsDiffer>
    <experiments>3</experiments>
</comment>
<comment type="interaction">
    <interactant intactId="EBI-1055945">
        <id>Q8TDX7</id>
    </interactant>
    <interactant intactId="EBI-10975491">
        <id>Q7Z6Z7-2</id>
        <label>HUWE1</label>
    </interactant>
    <organismsDiffer>false</organismsDiffer>
    <experiments>3</experiments>
</comment>
<comment type="interaction">
    <interactant intactId="EBI-1055945">
        <id>Q8TDX7</id>
    </interactant>
    <interactant intactId="EBI-715695">
        <id>O75874</id>
        <label>IDH1</label>
    </interactant>
    <organismsDiffer>false</organismsDiffer>
    <experiments>3</experiments>
</comment>
<comment type="interaction">
    <interactant intactId="EBI-1055945">
        <id>Q8TDX7</id>
    </interactant>
    <interactant intactId="EBI-2557660">
        <id>Q9ULR0</id>
        <label>ISY1</label>
    </interactant>
    <organismsDiffer>false</organismsDiffer>
    <experiments>3</experiments>
</comment>
<comment type="interaction">
    <interactant intactId="EBI-1055945">
        <id>Q8TDX7</id>
    </interactant>
    <interactant intactId="EBI-10171456">
        <id>A0JP07</id>
        <label>KIAA1683</label>
    </interactant>
    <organismsDiffer>false</organismsDiffer>
    <experiments>3</experiments>
</comment>
<comment type="interaction">
    <interactant intactId="EBI-1055945">
        <id>Q8TDX7</id>
    </interactant>
    <interactant intactId="EBI-9018187">
        <id>P26715</id>
        <label>KLRC1</label>
    </interactant>
    <organismsDiffer>false</organismsDiffer>
    <experiments>3</experiments>
</comment>
<comment type="interaction">
    <interactant intactId="EBI-1055945">
        <id>Q8TDX7</id>
    </interactant>
    <interactant intactId="EBI-11750531">
        <id>Q6P5S2</id>
        <label>LEG1</label>
    </interactant>
    <organismsDiffer>false</organismsDiffer>
    <experiments>3</experiments>
</comment>
<comment type="interaction">
    <interactant intactId="EBI-1055945">
        <id>Q8TDX7</id>
    </interactant>
    <interactant intactId="EBI-1048875">
        <id>P09382</id>
        <label>LGALS1</label>
    </interactant>
    <organismsDiffer>false</organismsDiffer>
    <experiments>3</experiments>
</comment>
<comment type="interaction">
    <interactant intactId="EBI-1055945">
        <id>Q8TDX7</id>
    </interactant>
    <interactant intactId="EBI-12069522">
        <id>O00214-2</id>
        <label>LGALS8</label>
    </interactant>
    <organismsDiffer>false</organismsDiffer>
    <experiments>3</experiments>
</comment>
<comment type="interaction">
    <interactant intactId="EBI-1055945">
        <id>Q8TDX7</id>
    </interactant>
    <interactant intactId="EBI-5650739">
        <id>P43356</id>
        <label>MAGEA2B</label>
    </interactant>
    <organismsDiffer>false</organismsDiffer>
    <experiments>3</experiments>
</comment>
<comment type="interaction">
    <interactant intactId="EBI-1055945">
        <id>Q8TDX7</id>
    </interactant>
    <interactant intactId="EBI-995373">
        <id>Q7Z434</id>
        <label>MAVS</label>
    </interactant>
    <organismsDiffer>false</organismsDiffer>
    <experiments>3</experiments>
</comment>
<comment type="interaction">
    <interactant intactId="EBI-1055945">
        <id>Q8TDX7</id>
    </interactant>
    <interactant intactId="EBI-744790">
        <id>Q8NCR3</id>
        <label>MFI</label>
    </interactant>
    <organismsDiffer>false</organismsDiffer>
    <experiments>3</experiments>
</comment>
<comment type="interaction">
    <interactant intactId="EBI-1055945">
        <id>Q8TDX7</id>
    </interactant>
    <interactant intactId="EBI-25834188">
        <id>Q8TB02</id>
        <label>MGC39372</label>
    </interactant>
    <organismsDiffer>false</organismsDiffer>
    <experiments>3</experiments>
</comment>
<comment type="interaction">
    <interactant intactId="EBI-1055945">
        <id>Q8TDX7</id>
    </interactant>
    <interactant intactId="EBI-7825413">
        <id>Q96EY8</id>
        <label>MMAB</label>
    </interactant>
    <organismsDiffer>false</organismsDiffer>
    <experiments>3</experiments>
</comment>
<comment type="interaction">
    <interactant intactId="EBI-1055945">
        <id>Q8TDX7</id>
    </interactant>
    <interactant intactId="EBI-9088235">
        <id>A2RUH7</id>
        <label>MYBPHL</label>
    </interactant>
    <organismsDiffer>false</organismsDiffer>
    <experiments>3</experiments>
</comment>
<comment type="interaction">
    <interactant intactId="EBI-1055945">
        <id>Q8TDX7</id>
    </interactant>
    <interactant intactId="EBI-3446748">
        <id>Q9NPC7</id>
        <label>MYNN</label>
    </interactant>
    <organismsDiffer>false</organismsDiffer>
    <experiments>3</experiments>
</comment>
<comment type="interaction">
    <interactant intactId="EBI-1055945">
        <id>Q8TDX7</id>
    </interactant>
    <interactant intactId="EBI-11750983">
        <id>Q9HC98-4</id>
        <label>NEK6</label>
    </interactant>
    <organismsDiffer>false</organismsDiffer>
    <experiments>3</experiments>
</comment>
<comment type="interaction">
    <interactant intactId="EBI-1055945">
        <id>Q8TDX7</id>
    </interactant>
    <interactant intactId="EBI-12305293">
        <id>Q8NCF5-2</id>
        <label>NFATC2IP</label>
    </interactant>
    <organismsDiffer>false</organismsDiffer>
    <experiments>3</experiments>
</comment>
<comment type="interaction">
    <interactant intactId="EBI-1055945">
        <id>Q8TDX7</id>
    </interactant>
    <interactant intactId="EBI-6253230">
        <id>Q96P20</id>
        <label>NLRP3</label>
    </interactant>
    <organismsDiffer>false</organismsDiffer>
    <experiments>4</experiments>
</comment>
<comment type="interaction">
    <interactant intactId="EBI-1055945">
        <id>Q8TDX7</id>
    </interactant>
    <interactant intactId="EBI-25834085">
        <id>Q8N323</id>
        <label>NXPE1</label>
    </interactant>
    <organismsDiffer>false</organismsDiffer>
    <experiments>3</experiments>
</comment>
<comment type="interaction">
    <interactant intactId="EBI-1055945">
        <id>Q8TDX7</id>
    </interactant>
    <interactant intactId="EBI-9091052">
        <id>Q6P4D5-2</id>
        <label>PABIR3</label>
    </interactant>
    <organismsDiffer>false</organismsDiffer>
    <experiments>3</experiments>
</comment>
<comment type="interaction">
    <interactant intactId="EBI-1055945">
        <id>Q8TDX7</id>
    </interactant>
    <interactant intactId="EBI-709599">
        <id>P00558</id>
        <label>PGK1</label>
    </interactant>
    <organismsDiffer>false</organismsDiffer>
    <experiments>2</experiments>
</comment>
<comment type="interaction">
    <interactant intactId="EBI-1055945">
        <id>Q8TDX7</id>
    </interactant>
    <interactant intactId="EBI-473160">
        <id>Q8N2W9</id>
        <label>PIAS4</label>
    </interactant>
    <organismsDiffer>false</organismsDiffer>
    <experiments>3</experiments>
</comment>
<comment type="interaction">
    <interactant intactId="EBI-1055945">
        <id>Q8TDX7</id>
    </interactant>
    <interactant intactId="EBI-2557132">
        <id>Q8NBT0</id>
        <label>POC1A</label>
    </interactant>
    <organismsDiffer>false</organismsDiffer>
    <experiments>3</experiments>
</comment>
<comment type="interaction">
    <interactant intactId="EBI-1055945">
        <id>Q8TDX7</id>
    </interactant>
    <interactant intactId="EBI-2931238">
        <id>O14829</id>
        <label>PPEF1</label>
    </interactant>
    <organismsDiffer>false</organismsDiffer>
    <experiments>3</experiments>
</comment>
<comment type="interaction">
    <interactant intactId="EBI-1055945">
        <id>Q8TDX7</id>
    </interactant>
    <interactant intactId="EBI-2860740">
        <id>Q96QH2</id>
        <label>PRAM1</label>
    </interactant>
    <organismsDiffer>false</organismsDiffer>
    <experiments>3</experiments>
</comment>
<comment type="interaction">
    <interactant intactId="EBI-1055945">
        <id>Q8TDX7</id>
    </interactant>
    <interactant intactId="EBI-709652">
        <id>Q9Y617</id>
        <label>PSAT1</label>
    </interactant>
    <organismsDiffer>false</organismsDiffer>
    <experiments>3</experiments>
</comment>
<comment type="interaction">
    <interactant intactId="EBI-1055945">
        <id>Q8TDX7</id>
    </interactant>
    <interactant intactId="EBI-743997">
        <id>P43686</id>
        <label>PSMC4</label>
    </interactant>
    <organismsDiffer>false</organismsDiffer>
    <experiments>3</experiments>
</comment>
<comment type="interaction">
    <interactant intactId="EBI-1055945">
        <id>Q8TDX7</id>
    </interactant>
    <interactant intactId="EBI-357648">
        <id>Q13200</id>
        <label>PSMD2</label>
    </interactant>
    <organismsDiffer>false</organismsDiffer>
    <experiments>3</experiments>
</comment>
<comment type="interaction">
    <interactant intactId="EBI-1055945">
        <id>Q8TDX7</id>
    </interactant>
    <interactant intactId="EBI-3397474">
        <id>Q9Y3Y4</id>
        <label>PYGO1</label>
    </interactant>
    <organismsDiffer>false</organismsDiffer>
    <experiments>3</experiments>
</comment>
<comment type="interaction">
    <interactant intactId="EBI-1055945">
        <id>Q8TDX7</id>
    </interactant>
    <interactant intactId="EBI-725987">
        <id>Q13636</id>
        <label>RAB31</label>
    </interactant>
    <organismsDiffer>false</organismsDiffer>
    <experiments>3</experiments>
</comment>
<comment type="interaction">
    <interactant intactId="EBI-1055945">
        <id>Q8TDX7</id>
    </interactant>
    <interactant intactId="EBI-4287022">
        <id>Q96E17</id>
        <label>RAB3C</label>
    </interactant>
    <organismsDiffer>false</organismsDiffer>
    <experiments>3</experiments>
</comment>
<comment type="interaction">
    <interactant intactId="EBI-1055945">
        <id>Q8TDX7</id>
    </interactant>
    <interactant intactId="EBI-358143">
        <id>P61224</id>
        <label>RAP1B</label>
    </interactant>
    <organismsDiffer>false</organismsDiffer>
    <experiments>3</experiments>
</comment>
<comment type="interaction">
    <interactant intactId="EBI-1055945">
        <id>Q8TDX7</id>
    </interactant>
    <interactant intactId="EBI-960081">
        <id>P50749</id>
        <label>RASSF2</label>
    </interactant>
    <organismsDiffer>false</organismsDiffer>
    <experiments>3</experiments>
</comment>
<comment type="interaction">
    <interactant intactId="EBI-1055945">
        <id>Q8TDX7</id>
    </interactant>
    <interactant intactId="EBI-740272">
        <id>Q96I25</id>
        <label>RBM17</label>
    </interactant>
    <organismsDiffer>false</organismsDiffer>
    <experiments>3</experiments>
</comment>
<comment type="interaction">
    <interactant intactId="EBI-1055945">
        <id>Q8TDX7</id>
    </interactant>
    <interactant intactId="EBI-714003">
        <id>P52756</id>
        <label>RBM5</label>
    </interactant>
    <organismsDiffer>false</organismsDiffer>
    <experiments>3</experiments>
</comment>
<comment type="interaction">
    <interactant intactId="EBI-1055945">
        <id>Q8TDX7</id>
    </interactant>
    <interactant intactId="EBI-359174">
        <id>Q02978</id>
        <label>SLC25A11</label>
    </interactant>
    <organismsDiffer>false</organismsDiffer>
    <experiments>3</experiments>
</comment>
<comment type="interaction">
    <interactant intactId="EBI-1055945">
        <id>Q8TDX7</id>
    </interactant>
    <interactant intactId="EBI-11175533">
        <id>Q3SY56</id>
        <label>SP6</label>
    </interactant>
    <organismsDiffer>false</organismsDiffer>
    <experiments>3</experiments>
</comment>
<comment type="interaction">
    <interactant intactId="EBI-1055945">
        <id>Q8TDX7</id>
    </interactant>
    <interactant intactId="EBI-13322423">
        <id>Q96L03</id>
        <label>SPATA17</label>
    </interactant>
    <organismsDiffer>false</organismsDiffer>
    <experiments>3</experiments>
</comment>
<comment type="interaction">
    <interactant intactId="EBI-1055945">
        <id>Q8TDX7</id>
    </interactant>
    <interactant intactId="EBI-7082156">
        <id>Q7Z698</id>
        <label>SPRED2</label>
    </interactant>
    <organismsDiffer>false</organismsDiffer>
    <experiments>3</experiments>
</comment>
<comment type="interaction">
    <interactant intactId="EBI-1055945">
        <id>Q8TDX7</id>
    </interactant>
    <interactant intactId="EBI-25833693">
        <id>F6Y2X3</id>
        <label>TAFAZZIN</label>
    </interactant>
    <organismsDiffer>false</organismsDiffer>
    <experiments>3</experiments>
</comment>
<comment type="interaction">
    <interactant intactId="EBI-1055945">
        <id>Q8TDX7</id>
    </interactant>
    <interactant intactId="EBI-25832010">
        <id>Q13428-5</id>
        <label>TCOF1</label>
    </interactant>
    <organismsDiffer>false</organismsDiffer>
    <experiments>3</experiments>
</comment>
<comment type="interaction">
    <interactant intactId="EBI-1055945">
        <id>Q8TDX7</id>
    </interactant>
    <interactant intactId="EBI-743494">
        <id>P48775</id>
        <label>TDO2</label>
    </interactant>
    <organismsDiffer>false</organismsDiffer>
    <experiments>3</experiments>
</comment>
<comment type="interaction">
    <interactant intactId="EBI-1055945">
        <id>Q8TDX7</id>
    </interactant>
    <interactant intactId="EBI-741350">
        <id>Q9BT49</id>
        <label>THAP7</label>
    </interactant>
    <organismsDiffer>false</organismsDiffer>
    <experiments>3</experiments>
</comment>
<comment type="interaction">
    <interactant intactId="EBI-1055945">
        <id>Q8TDX7</id>
    </interactant>
    <interactant intactId="EBI-2530931">
        <id>P49746</id>
        <label>THBS3</label>
    </interactant>
    <organismsDiffer>false</organismsDiffer>
    <experiments>3</experiments>
</comment>
<comment type="interaction">
    <interactant intactId="EBI-1055945">
        <id>Q8TDX7</id>
    </interactant>
    <interactant intactId="EBI-395393">
        <id>P42166</id>
        <label>TMPO</label>
    </interactant>
    <organismsDiffer>false</organismsDiffer>
    <experiments>2</experiments>
</comment>
<comment type="interaction">
    <interactant intactId="EBI-1055945">
        <id>Q8TDX7</id>
    </interactant>
    <interactant intactId="EBI-25833898">
        <id>Q96JJ7-2</id>
        <label>TMX3</label>
    </interactant>
    <organismsDiffer>false</organismsDiffer>
    <experiments>3</experiments>
</comment>
<comment type="interaction">
    <interactant intactId="EBI-1055945">
        <id>Q8TDX7</id>
    </interactant>
    <interactant intactId="EBI-12003398">
        <id>Q9H2S6-2</id>
        <label>TNMD</label>
    </interactant>
    <organismsDiffer>false</organismsDiffer>
    <experiments>3</experiments>
</comment>
<comment type="interaction">
    <interactant intactId="EBI-1055945">
        <id>Q8TDX7</id>
    </interactant>
    <interactant intactId="EBI-9091010">
        <id>Q68CL5-3</id>
        <label>TPGS2</label>
    </interactant>
    <organismsDiffer>false</organismsDiffer>
    <experiments>3</experiments>
</comment>
<comment type="interaction">
    <interactant intactId="EBI-1055945">
        <id>Q8TDX7</id>
    </interactant>
    <interactant intactId="EBI-1037322">
        <id>Q9ULW0</id>
        <label>TPX2</label>
    </interactant>
    <organismsDiffer>false</organismsDiffer>
    <experiments>3</experiments>
</comment>
<comment type="interaction">
    <interactant intactId="EBI-1055945">
        <id>Q8TDX7</id>
    </interactant>
    <interactant intactId="EBI-12581310">
        <id>Q9NX07</id>
        <label>TRNAU1AP</label>
    </interactant>
    <organismsDiffer>false</organismsDiffer>
    <experiments>3</experiments>
</comment>
<comment type="interaction">
    <interactant intactId="EBI-1055945">
        <id>Q8TDX7</id>
    </interactant>
    <interactant intactId="EBI-350864">
        <id>P07437</id>
        <label>TUBB</label>
    </interactant>
    <organismsDiffer>false</organismsDiffer>
    <experiments>3</experiments>
</comment>
<comment type="interaction">
    <interactant intactId="EBI-1055945">
        <id>Q8TDX7</id>
    </interactant>
    <interactant intactId="EBI-25833730">
        <id>Q7Z780</id>
        <label>U2AF1</label>
    </interactant>
    <organismsDiffer>false</organismsDiffer>
    <experiments>3</experiments>
</comment>
<comment type="interaction">
    <interactant intactId="EBI-1055945">
        <id>Q8TDX7</id>
    </interactant>
    <interactant intactId="EBI-2511507">
        <id>O75317</id>
        <label>USP12</label>
    </interactant>
    <organismsDiffer>false</organismsDiffer>
    <experiments>3</experiments>
</comment>
<comment type="interaction">
    <interactant intactId="EBI-1055945">
        <id>Q8TDX7</id>
    </interactant>
    <interactant intactId="EBI-25830993">
        <id>Q96EF9</id>
        <label>ZHX1-C8orf76</label>
    </interactant>
    <organismsDiffer>false</organismsDiffer>
    <experiments>3</experiments>
</comment>
<comment type="interaction">
    <interactant intactId="EBI-1055945">
        <id>Q8TDX7</id>
    </interactant>
    <interactant intactId="EBI-22013570">
        <id>Q9BQ29</id>
    </interactant>
    <organismsDiffer>false</organismsDiffer>
    <experiments>3</experiments>
</comment>
<comment type="interaction">
    <interactant intactId="EBI-16193799">
        <id>Q8TDX7-1</id>
    </interactant>
    <interactant intactId="EBI-14029575">
        <id>Q96P20-1</id>
        <label>NLRP3</label>
    </interactant>
    <organismsDiffer>false</organismsDiffer>
    <experiments>6</experiments>
</comment>
<comment type="subcellular location">
    <subcellularLocation>
        <location evidence="3">Nucleus</location>
    </subcellularLocation>
    <subcellularLocation>
        <location evidence="11">Cytoplasm</location>
    </subcellularLocation>
    <subcellularLocation>
        <location evidence="12">Cytoplasm</location>
        <location evidence="12">Cytoskeleton</location>
        <location evidence="12">Spindle pole</location>
    </subcellularLocation>
    <subcellularLocation>
        <location evidence="9 11">Cytoplasm</location>
        <location evidence="9 11">Cytoskeleton</location>
        <location evidence="9 11">Microtubule organizing center</location>
        <location evidence="9 11">Centrosome</location>
    </subcellularLocation>
    <text evidence="3 11">Present at centrosome throughout the cell cycle (PubMed:17586473). Also detected at spindle midzone of the anaphase cells and eventually concentrates at the midbody (PubMed:17586473). Interaction with ANKS3 prevents its translocation to the nucleus (By similarity).</text>
</comment>
<comment type="alternative products">
    <event type="alternative splicing"/>
    <isoform>
        <id>Q8TDX7-1</id>
        <name>1</name>
        <sequence type="displayed"/>
    </isoform>
    <isoform>
        <id>Q8TDX7-2</id>
        <name>2</name>
        <sequence type="described" ref="VSP_041243 VSP_041244"/>
    </isoform>
</comment>
<comment type="tissue specificity">
    <text evidence="7">Highly expressed in lung, muscle, testis, brain, heart, liver, leukocyte and spleen. Lower expression in ovary, prostate and kidney. No expression seen in small intestine.</text>
</comment>
<comment type="domain">
    <text evidence="13">Displays an autoinhibited conformation: Tyr-97 side chain points into the active site, interacts with the activation loop, and blocks the alphaC helix. The autoinhibitory conformation is released upon binding with NEK9.</text>
</comment>
<comment type="domain">
    <text evidence="13">The NTE (N-terminal extension) motif is a structural component of the catalytic domain and thus contributes to activity.</text>
</comment>
<comment type="PTM">
    <text evidence="8 16">Phosphorylation at Ser-195 required for its activation.</text>
</comment>
<comment type="similarity">
    <text evidence="24">Belongs to the protein kinase superfamily. NEK Ser/Thr protein kinase family. NIMA subfamily.</text>
</comment>
<sequence>MDEQSQGMQGPPVPQFQPQKALRPDMGYNTLANFRIEKKIGRGQFSEVYRAACLLDGVPVALKKVQIFDLMDAKARADCIKEIDLLKQLNHPNVIKYYASFIEDNELNIVLELADAGDLSRMIKHFKKQKRLIPERTVWKYFVQLCSALEHMHSRRVMHRDIKPANVFITATGVVKLGDLGLGRFFSSKTTAAHSLVGTPYYMSPERIHENGYNFKSDIWSLGCLLYEMAALQSPFYGDKMNLYSLCKKIEQCDYPPLPSDHYSEELRQLVNMCINPDPEKRPDVTYVYDVAKRMHACTASS</sequence>
<keyword id="KW-0002">3D-structure</keyword>
<keyword id="KW-0007">Acetylation</keyword>
<keyword id="KW-0025">Alternative splicing</keyword>
<keyword id="KW-0067">ATP-binding</keyword>
<keyword id="KW-0963">Cytoplasm</keyword>
<keyword id="KW-0206">Cytoskeleton</keyword>
<keyword id="KW-0418">Kinase</keyword>
<keyword id="KW-0460">Magnesium</keyword>
<keyword id="KW-0479">Metal-binding</keyword>
<keyword id="KW-0493">Microtubule</keyword>
<keyword id="KW-0547">Nucleotide-binding</keyword>
<keyword id="KW-0539">Nucleus</keyword>
<keyword id="KW-0597">Phosphoprotein</keyword>
<keyword id="KW-1267">Proteomics identification</keyword>
<keyword id="KW-1185">Reference proteome</keyword>
<keyword id="KW-0723">Serine/threonine-protein kinase</keyword>
<keyword id="KW-0808">Transferase</keyword>
<feature type="chain" id="PRO_0000086430" description="Serine/threonine-protein kinase Nek7">
    <location>
        <begin position="1"/>
        <end position="302"/>
    </location>
</feature>
<feature type="domain" description="Protein kinase" evidence="4">
    <location>
        <begin position="34"/>
        <end position="299"/>
    </location>
</feature>
<feature type="region of interest" description="Disordered" evidence="6">
    <location>
        <begin position="1"/>
        <end position="21"/>
    </location>
</feature>
<feature type="region of interest" description="NTE motif" evidence="13">
    <location>
        <begin position="20"/>
        <end position="33"/>
    </location>
</feature>
<feature type="active site" description="Proton acceptor" evidence="4 5">
    <location>
        <position position="161"/>
    </location>
</feature>
<feature type="binding site" evidence="25 28">
    <location>
        <begin position="40"/>
        <end position="48"/>
    </location>
    <ligand>
        <name>ATP</name>
        <dbReference type="ChEBI" id="CHEBI:30616"/>
    </ligand>
</feature>
<feature type="binding site" evidence="25 28">
    <location>
        <position position="63"/>
    </location>
    <ligand>
        <name>ATP</name>
        <dbReference type="ChEBI" id="CHEBI:30616"/>
    </ligand>
</feature>
<feature type="site" description="Autoinhibitory" evidence="13">
    <location>
        <position position="97"/>
    </location>
</feature>
<feature type="modified residue" description="N-acetylmethionine" evidence="31">
    <location>
        <position position="1"/>
    </location>
</feature>
<feature type="modified residue" description="Phosphoserine" evidence="32">
    <location>
        <position position="5"/>
    </location>
</feature>
<feature type="modified residue" description="Phosphoserine; by NEK9" evidence="8 16">
    <location>
        <position position="195"/>
    </location>
</feature>
<feature type="splice variant" id="VSP_041243" description="In isoform 2." evidence="23">
    <original>IFDLMDAKARADCIKEIDLLKQLNHPNVIKYYASFIEDNELNIVLELADAGDL</original>
    <variation>VCLLPVWERRVCALNACYFLEIIKGSESLQYMATLTNLFENLPVSHHGSFAKK</variation>
    <location>
        <begin position="67"/>
        <end position="119"/>
    </location>
</feature>
<feature type="splice variant" id="VSP_041244" description="In isoform 2." evidence="23">
    <location>
        <begin position="120"/>
        <end position="302"/>
    </location>
</feature>
<feature type="sequence variant" id="VAR_040924" description="In dbSNP:rs55833332." evidence="10">
    <original>R</original>
    <variation>G</variation>
    <location>
        <position position="35"/>
    </location>
</feature>
<feature type="sequence variant" id="VAR_040925" description="In an ovarian serous carcinoma sample; somatic mutation." evidence="10">
    <original>I</original>
    <variation>M</variation>
    <location>
        <position position="275"/>
    </location>
</feature>
<feature type="mutagenesis site" description="Significant decrease in catalytic activity; when associated with A-31." evidence="13">
    <original>Y</original>
    <variation>A</variation>
    <location>
        <position position="28"/>
    </location>
</feature>
<feature type="mutagenesis site" description="Significant decrease in catalytic activity; when associated with A-28." evidence="13">
    <original>L</original>
    <variation>A</variation>
    <location>
        <position position="31"/>
    </location>
</feature>
<feature type="mutagenesis site" description="Significant decrease in catalytic activity." evidence="13">
    <original>N</original>
    <variation>D</variation>
    <location>
        <position position="33"/>
    </location>
</feature>
<feature type="mutagenesis site" description="Reduced protein kinase activity." evidence="16">
    <original>N</original>
    <variation>A</variation>
    <location>
        <position position="90"/>
    </location>
</feature>
<feature type="mutagenesis site" description="Strongly reduced protein kinase activity." evidence="16">
    <original>N</original>
    <variation>R</variation>
    <variation>K</variation>
    <location>
        <position position="90"/>
    </location>
</feature>
<feature type="mutagenesis site" description="Strongly increased protein kinase activity." evidence="16">
    <original>K</original>
    <variation>E</variation>
    <location>
        <position position="96"/>
    </location>
</feature>
<feature type="mutagenesis site" description="5-fold increase in catalytic activity." evidence="13 16">
    <original>Y</original>
    <variation>A</variation>
    <location>
        <position position="97"/>
    </location>
</feature>
<feature type="mutagenesis site" description="Moderate increase in catalytic activity." evidence="13">
    <original>Y</original>
    <variation>F</variation>
    <variation>L</variation>
    <location>
        <position position="97"/>
    </location>
</feature>
<feature type="mutagenesis site" description="Decreased interaction with NEK9 and subsequent activation of NEK7 kinase activity." evidence="16">
    <original>M</original>
    <variation>A</variation>
    <variation>R</variation>
    <location>
        <position position="122"/>
    </location>
</feature>
<feature type="mutagenesis site" description="Does not affect interaction with NEK9." evidence="16">
    <original>H</original>
    <variation>A</variation>
    <location>
        <position position="125"/>
    </location>
</feature>
<feature type="mutagenesis site" description="Does not affect interaction with NLRP3." evidence="18">
    <original>K</original>
    <variation>E</variation>
    <location>
        <position position="128"/>
    </location>
</feature>
<feature type="mutagenesis site" description="Decreased interaction with NLRP3." evidence="18">
    <original>Q</original>
    <variation>R</variation>
    <location>
        <position position="129"/>
    </location>
</feature>
<feature type="mutagenesis site" description="Does not affect interaction with NEK9." evidence="16">
    <original>K</original>
    <variation>A</variation>
    <variation>E</variation>
    <location>
        <position position="130"/>
    </location>
</feature>
<feature type="mutagenesis site" description="Abolished interaction with NEK9 and subsequent activation of NEK7 kinase activity." evidence="16">
    <original>R</original>
    <variation>A</variation>
    <variation>D</variation>
    <location>
        <position position="131"/>
    </location>
</feature>
<feature type="mutagenesis site" description="Decreased interaction with NLRP3." evidence="18">
    <original>R</original>
    <variation>E</variation>
    <location>
        <position position="131"/>
    </location>
</feature>
<feature type="mutagenesis site" description="Abolished interaction with NEK9 and subsequent activation of NEK7 kinase activity." evidence="16">
    <original>L</original>
    <variation>D</variation>
    <location>
        <position position="132"/>
    </location>
</feature>
<feature type="mutagenesis site" description="Does not affect interaction with NEK9." evidence="16">
    <original>L</original>
    <variation>W</variation>
    <location>
        <position position="132"/>
    </location>
</feature>
<feature type="mutagenesis site" description="Decreased interaction with NLRP3." evidence="18">
    <original>R</original>
    <variation>E</variation>
    <location>
        <position position="136"/>
    </location>
</feature>
<feature type="mutagenesis site" description="Strongly reduced protein kinase activity." evidence="16">
    <original>R</original>
    <variation>E</variation>
    <location>
        <position position="155"/>
    </location>
</feature>
<feature type="mutagenesis site" description="Does not affect interaction with NEK9." evidence="16">
    <original>I</original>
    <variation>F</variation>
    <location>
        <position position="169"/>
    </location>
</feature>
<feature type="mutagenesis site" description="Does not affect interaction with NEK9." evidence="16">
    <original>T</original>
    <variation>A</variation>
    <location>
        <position position="172"/>
    </location>
</feature>
<feature type="mutagenesis site" description="Abolished phosphorylation with NEK9 and protein kinase activity." evidence="16">
    <original>S</original>
    <variation>A</variation>
    <location>
        <position position="195"/>
    </location>
</feature>
<feature type="mutagenesis site" description="Decreased interaction with NLRP3." evidence="18">
    <original>SDHYSE</original>
    <variation>ARHYSR</variation>
    <location>
        <begin position="260"/>
        <end position="265"/>
    </location>
</feature>
<feature type="mutagenesis site" description="Decreased interaction with NLRP3." evidence="18">
    <original>SD</original>
    <variation>AR</variation>
    <location>
        <begin position="260"/>
        <end position="261"/>
    </location>
</feature>
<feature type="mutagenesis site" description="Does not affect interaction with NEK9." evidence="16">
    <original>D</original>
    <variation>A</variation>
    <location>
        <position position="261"/>
    </location>
</feature>
<feature type="mutagenesis site" description="Does not affect interaction with NEK9." evidence="16">
    <original>H</original>
    <variation>A</variation>
    <location>
        <position position="262"/>
    </location>
</feature>
<feature type="mutagenesis site" description="Does not affect interaction with NLRP3." evidence="18">
    <original>E</original>
    <variation>V</variation>
    <variation>R</variation>
    <location>
        <position position="280"/>
    </location>
</feature>
<feature type="mutagenesis site" description="Does not affect interaction with NLRP3." evidence="18">
    <original>D</original>
    <variation>R</variation>
    <location>
        <position position="290"/>
    </location>
</feature>
<feature type="mutagenesis site" description="Does not affect interaction with NLRP3." evidence="18">
    <original>R</original>
    <variation>E</variation>
    <location>
        <position position="294"/>
    </location>
</feature>
<feature type="helix" evidence="33">
    <location>
        <begin position="24"/>
        <end position="26"/>
    </location>
</feature>
<feature type="helix" evidence="33">
    <location>
        <begin position="31"/>
        <end position="33"/>
    </location>
</feature>
<feature type="strand" evidence="33">
    <location>
        <begin position="34"/>
        <end position="41"/>
    </location>
</feature>
<feature type="strand" evidence="37">
    <location>
        <begin position="43"/>
        <end position="45"/>
    </location>
</feature>
<feature type="strand" evidence="33">
    <location>
        <begin position="47"/>
        <end position="53"/>
    </location>
</feature>
<feature type="turn" evidence="33">
    <location>
        <begin position="54"/>
        <end position="56"/>
    </location>
</feature>
<feature type="strand" evidence="33">
    <location>
        <begin position="59"/>
        <end position="65"/>
    </location>
</feature>
<feature type="turn" evidence="34">
    <location>
        <begin position="67"/>
        <end position="70"/>
    </location>
</feature>
<feature type="helix" evidence="33">
    <location>
        <begin position="73"/>
        <end position="87"/>
    </location>
</feature>
<feature type="strand" evidence="33">
    <location>
        <begin position="97"/>
        <end position="103"/>
    </location>
</feature>
<feature type="strand" evidence="33">
    <location>
        <begin position="106"/>
        <end position="112"/>
    </location>
</feature>
<feature type="strand" evidence="36">
    <location>
        <begin position="115"/>
        <end position="118"/>
    </location>
</feature>
<feature type="helix" evidence="33">
    <location>
        <begin position="119"/>
        <end position="128"/>
    </location>
</feature>
<feature type="helix" evidence="33">
    <location>
        <begin position="135"/>
        <end position="154"/>
    </location>
</feature>
<feature type="helix" evidence="33">
    <location>
        <begin position="164"/>
        <end position="166"/>
    </location>
</feature>
<feature type="strand" evidence="33">
    <location>
        <begin position="167"/>
        <end position="169"/>
    </location>
</feature>
<feature type="strand" evidence="36">
    <location>
        <begin position="171"/>
        <end position="173"/>
    </location>
</feature>
<feature type="strand" evidence="33">
    <location>
        <begin position="175"/>
        <end position="177"/>
    </location>
</feature>
<feature type="helix" evidence="33">
    <location>
        <begin position="205"/>
        <end position="208"/>
    </location>
</feature>
<feature type="turn" evidence="35">
    <location>
        <begin position="209"/>
        <end position="211"/>
    </location>
</feature>
<feature type="helix" evidence="33">
    <location>
        <begin position="215"/>
        <end position="231"/>
    </location>
</feature>
<feature type="helix" evidence="33">
    <location>
        <begin position="243"/>
        <end position="251"/>
    </location>
</feature>
<feature type="turn" evidence="33">
    <location>
        <begin position="260"/>
        <end position="262"/>
    </location>
</feature>
<feature type="helix" evidence="33">
    <location>
        <begin position="265"/>
        <end position="274"/>
    </location>
</feature>
<feature type="helix" evidence="33">
    <location>
        <begin position="279"/>
        <end position="281"/>
    </location>
</feature>
<feature type="helix" evidence="33">
    <location>
        <begin position="285"/>
        <end position="299"/>
    </location>
</feature>
<gene>
    <name evidence="22 27" type="primary">NEK7</name>
</gene>
<protein>
    <recommendedName>
        <fullName evidence="26">Serine/threonine-protein kinase Nek7</fullName>
        <ecNumber evidence="13 16 19">2.7.11.34</ecNumber>
    </recommendedName>
    <alternativeName>
        <fullName evidence="22">Never in mitosis A-related kinase 7</fullName>
        <shortName evidence="22">NimA-related protein kinase 7</shortName>
    </alternativeName>
</protein>
<organism>
    <name type="scientific">Homo sapiens</name>
    <name type="common">Human</name>
    <dbReference type="NCBI Taxonomy" id="9606"/>
    <lineage>
        <taxon>Eukaryota</taxon>
        <taxon>Metazoa</taxon>
        <taxon>Chordata</taxon>
        <taxon>Craniata</taxon>
        <taxon>Vertebrata</taxon>
        <taxon>Euteleostomi</taxon>
        <taxon>Mammalia</taxon>
        <taxon>Eutheria</taxon>
        <taxon>Euarchontoglires</taxon>
        <taxon>Primates</taxon>
        <taxon>Haplorrhini</taxon>
        <taxon>Catarrhini</taxon>
        <taxon>Hominidae</taxon>
        <taxon>Homo</taxon>
    </lineage>
</organism>
<accession>Q8TDX7</accession>
<accession>A6NGT8</accession>
<reference key="1">
    <citation type="journal article" date="2001" name="Cytogenet. Cell Genet.">
        <title>Identification and assignment of the human NIMA-related protein kinase 7 gene (NEK7) to human chromosome 1q31.3.</title>
        <authorList>
            <person name="Kimura M."/>
            <person name="Okano Y."/>
        </authorList>
    </citation>
    <scope>NUCLEOTIDE SEQUENCE [MRNA] (ISOFORM 1)</scope>
    <scope>TISSUE SPECIFICITY</scope>
</reference>
<reference key="2">
    <citation type="submission" date="2004-03" db="EMBL/GenBank/DDBJ databases">
        <title>WashU-Harvard pancreas EST project.</title>
        <authorList>
            <person name="Melton D."/>
            <person name="Meadows A."/>
            <person name="Clifton S."/>
            <person name="Hillier L."/>
            <person name="Marra M."/>
            <person name="Pape D."/>
            <person name="Wylie T."/>
            <person name="Martin J."/>
            <person name="Blistain A."/>
            <person name="Schmitt A."/>
            <person name="Theising B."/>
            <person name="Ritter E."/>
            <person name="Ronko I."/>
            <person name="Bennett J."/>
            <person name="Cardenas M."/>
            <person name="Gibbons M."/>
            <person name="McCann R."/>
            <person name="Cole R."/>
            <person name="Tsagareishvili R."/>
            <person name="Williams T."/>
            <person name="Jackson Y."/>
            <person name="Bowers Y."/>
        </authorList>
    </citation>
    <scope>NUCLEOTIDE SEQUENCE [MRNA] (ISOFORM 2)</scope>
    <source>
        <tissue>Pancreatic islet</tissue>
    </source>
</reference>
<reference key="3">
    <citation type="journal article" date="2006" name="Nature">
        <title>The DNA sequence and biological annotation of human chromosome 1.</title>
        <authorList>
            <person name="Gregory S.G."/>
            <person name="Barlow K.F."/>
            <person name="McLay K.E."/>
            <person name="Kaul R."/>
            <person name="Swarbreck D."/>
            <person name="Dunham A."/>
            <person name="Scott C.E."/>
            <person name="Howe K.L."/>
            <person name="Woodfine K."/>
            <person name="Spencer C.C.A."/>
            <person name="Jones M.C."/>
            <person name="Gillson C."/>
            <person name="Searle S."/>
            <person name="Zhou Y."/>
            <person name="Kokocinski F."/>
            <person name="McDonald L."/>
            <person name="Evans R."/>
            <person name="Phillips K."/>
            <person name="Atkinson A."/>
            <person name="Cooper R."/>
            <person name="Jones C."/>
            <person name="Hall R.E."/>
            <person name="Andrews T.D."/>
            <person name="Lloyd C."/>
            <person name="Ainscough R."/>
            <person name="Almeida J.P."/>
            <person name="Ambrose K.D."/>
            <person name="Anderson F."/>
            <person name="Andrew R.W."/>
            <person name="Ashwell R.I.S."/>
            <person name="Aubin K."/>
            <person name="Babbage A.K."/>
            <person name="Bagguley C.L."/>
            <person name="Bailey J."/>
            <person name="Beasley H."/>
            <person name="Bethel G."/>
            <person name="Bird C.P."/>
            <person name="Bray-Allen S."/>
            <person name="Brown J.Y."/>
            <person name="Brown A.J."/>
            <person name="Buckley D."/>
            <person name="Burton J."/>
            <person name="Bye J."/>
            <person name="Carder C."/>
            <person name="Chapman J.C."/>
            <person name="Clark S.Y."/>
            <person name="Clarke G."/>
            <person name="Clee C."/>
            <person name="Cobley V."/>
            <person name="Collier R.E."/>
            <person name="Corby N."/>
            <person name="Coville G.J."/>
            <person name="Davies J."/>
            <person name="Deadman R."/>
            <person name="Dunn M."/>
            <person name="Earthrowl M."/>
            <person name="Ellington A.G."/>
            <person name="Errington H."/>
            <person name="Frankish A."/>
            <person name="Frankland J."/>
            <person name="French L."/>
            <person name="Garner P."/>
            <person name="Garnett J."/>
            <person name="Gay L."/>
            <person name="Ghori M.R.J."/>
            <person name="Gibson R."/>
            <person name="Gilby L.M."/>
            <person name="Gillett W."/>
            <person name="Glithero R.J."/>
            <person name="Grafham D.V."/>
            <person name="Griffiths C."/>
            <person name="Griffiths-Jones S."/>
            <person name="Grocock R."/>
            <person name="Hammond S."/>
            <person name="Harrison E.S.I."/>
            <person name="Hart E."/>
            <person name="Haugen E."/>
            <person name="Heath P.D."/>
            <person name="Holmes S."/>
            <person name="Holt K."/>
            <person name="Howden P.J."/>
            <person name="Hunt A.R."/>
            <person name="Hunt S.E."/>
            <person name="Hunter G."/>
            <person name="Isherwood J."/>
            <person name="James R."/>
            <person name="Johnson C."/>
            <person name="Johnson D."/>
            <person name="Joy A."/>
            <person name="Kay M."/>
            <person name="Kershaw J.K."/>
            <person name="Kibukawa M."/>
            <person name="Kimberley A.M."/>
            <person name="King A."/>
            <person name="Knights A.J."/>
            <person name="Lad H."/>
            <person name="Laird G."/>
            <person name="Lawlor S."/>
            <person name="Leongamornlert D.A."/>
            <person name="Lloyd D.M."/>
            <person name="Loveland J."/>
            <person name="Lovell J."/>
            <person name="Lush M.J."/>
            <person name="Lyne R."/>
            <person name="Martin S."/>
            <person name="Mashreghi-Mohammadi M."/>
            <person name="Matthews L."/>
            <person name="Matthews N.S.W."/>
            <person name="McLaren S."/>
            <person name="Milne S."/>
            <person name="Mistry S."/>
            <person name="Moore M.J.F."/>
            <person name="Nickerson T."/>
            <person name="O'Dell C.N."/>
            <person name="Oliver K."/>
            <person name="Palmeiri A."/>
            <person name="Palmer S.A."/>
            <person name="Parker A."/>
            <person name="Patel D."/>
            <person name="Pearce A.V."/>
            <person name="Peck A.I."/>
            <person name="Pelan S."/>
            <person name="Phelps K."/>
            <person name="Phillimore B.J."/>
            <person name="Plumb R."/>
            <person name="Rajan J."/>
            <person name="Raymond C."/>
            <person name="Rouse G."/>
            <person name="Saenphimmachak C."/>
            <person name="Sehra H.K."/>
            <person name="Sheridan E."/>
            <person name="Shownkeen R."/>
            <person name="Sims S."/>
            <person name="Skuce C.D."/>
            <person name="Smith M."/>
            <person name="Steward C."/>
            <person name="Subramanian S."/>
            <person name="Sycamore N."/>
            <person name="Tracey A."/>
            <person name="Tromans A."/>
            <person name="Van Helmond Z."/>
            <person name="Wall M."/>
            <person name="Wallis J.M."/>
            <person name="White S."/>
            <person name="Whitehead S.L."/>
            <person name="Wilkinson J.E."/>
            <person name="Willey D.L."/>
            <person name="Williams H."/>
            <person name="Wilming L."/>
            <person name="Wray P.W."/>
            <person name="Wu Z."/>
            <person name="Coulson A."/>
            <person name="Vaudin M."/>
            <person name="Sulston J.E."/>
            <person name="Durbin R.M."/>
            <person name="Hubbard T."/>
            <person name="Wooster R."/>
            <person name="Dunham I."/>
            <person name="Carter N.P."/>
            <person name="McVean G."/>
            <person name="Ross M.T."/>
            <person name="Harrow J."/>
            <person name="Olson M.V."/>
            <person name="Beck S."/>
            <person name="Rogers J."/>
            <person name="Bentley D.R."/>
        </authorList>
    </citation>
    <scope>NUCLEOTIDE SEQUENCE [LARGE SCALE GENOMIC DNA]</scope>
</reference>
<reference key="4">
    <citation type="submission" date="2005-07" db="EMBL/GenBank/DDBJ databases">
        <authorList>
            <person name="Mural R.J."/>
            <person name="Istrail S."/>
            <person name="Sutton G.G."/>
            <person name="Florea L."/>
            <person name="Halpern A.L."/>
            <person name="Mobarry C.M."/>
            <person name="Lippert R."/>
            <person name="Walenz B."/>
            <person name="Shatkay H."/>
            <person name="Dew I."/>
            <person name="Miller J.R."/>
            <person name="Flanigan M.J."/>
            <person name="Edwards N.J."/>
            <person name="Bolanos R."/>
            <person name="Fasulo D."/>
            <person name="Halldorsson B.V."/>
            <person name="Hannenhalli S."/>
            <person name="Turner R."/>
            <person name="Yooseph S."/>
            <person name="Lu F."/>
            <person name="Nusskern D.R."/>
            <person name="Shue B.C."/>
            <person name="Zheng X.H."/>
            <person name="Zhong F."/>
            <person name="Delcher A.L."/>
            <person name="Huson D.H."/>
            <person name="Kravitz S.A."/>
            <person name="Mouchard L."/>
            <person name="Reinert K."/>
            <person name="Remington K.A."/>
            <person name="Clark A.G."/>
            <person name="Waterman M.S."/>
            <person name="Eichler E.E."/>
            <person name="Adams M.D."/>
            <person name="Hunkapiller M.W."/>
            <person name="Myers E.W."/>
            <person name="Venter J.C."/>
        </authorList>
    </citation>
    <scope>NUCLEOTIDE SEQUENCE [LARGE SCALE GENOMIC DNA]</scope>
</reference>
<reference key="5">
    <citation type="journal article" date="2003" name="J. Biol. Chem.">
        <title>A mitotic cascade of NIMA family kinases. Nercc1/Nek9 activates the Nek6 and Nek7 kinases.</title>
        <authorList>
            <person name="Belham C."/>
            <person name="Roig J."/>
            <person name="Caldwell J.A."/>
            <person name="Aoyama Y."/>
            <person name="Kemp B.E."/>
            <person name="Comb M."/>
            <person name="Avruch J."/>
        </authorList>
    </citation>
    <scope>PHOSPHORYLATION AT SER-195</scope>
</reference>
<reference key="6">
    <citation type="journal article" date="2006" name="FEBS Lett.">
        <title>Nek7 kinase is enriched at the centrosome, and is required for proper spindle assembly and mitotic progression.</title>
        <authorList>
            <person name="Yissachar N."/>
            <person name="Salem H."/>
            <person name="Tennenbaum T."/>
            <person name="Motro B."/>
        </authorList>
    </citation>
    <scope>FUNCTION</scope>
    <scope>SUBCELLULAR LOCATION</scope>
</reference>
<reference key="7">
    <citation type="journal article" date="2007" name="Biochem. Biophys. Res. Commun.">
        <title>NEK7 is a centrosomal kinase critical for microtubule nucleation.</title>
        <authorList>
            <person name="Kim S."/>
            <person name="Lee K."/>
            <person name="Rhee K."/>
        </authorList>
    </citation>
    <scope>FUNCTION</scope>
    <scope>SUBCELLULAR LOCATION</scope>
</reference>
<reference key="8">
    <citation type="journal article" date="2009" name="Anal. Chem.">
        <title>Lys-N and trypsin cover complementary parts of the phosphoproteome in a refined SCX-based approach.</title>
        <authorList>
            <person name="Gauci S."/>
            <person name="Helbig A.O."/>
            <person name="Slijper M."/>
            <person name="Krijgsveld J."/>
            <person name="Heck A.J."/>
            <person name="Mohammed S."/>
        </authorList>
    </citation>
    <scope>ACETYLATION [LARGE SCALE ANALYSIS] AT MET-1</scope>
    <scope>IDENTIFICATION BY MASS SPECTROMETRY [LARGE SCALE ANALYSIS]</scope>
</reference>
<reference key="9">
    <citation type="journal article" date="2009" name="Mol. Cell. Biol.">
        <title>The Nek6 and Nek7 protein kinases are required for robust mitotic spindle formation and cytokinesis.</title>
        <authorList>
            <person name="O'Regan L."/>
            <person name="Fry A.M."/>
        </authorList>
    </citation>
    <scope>FUNCTION</scope>
    <scope>SUBCELLULAR LOCATION</scope>
    <scope>INTERACTION WITH NEK9</scope>
</reference>
<reference key="10">
    <citation type="journal article" date="2009" name="Sci. Signal.">
        <title>Quantitative phosphoproteomic analysis of T cell receptor signaling reveals system-wide modulation of protein-protein interactions.</title>
        <authorList>
            <person name="Mayya V."/>
            <person name="Lundgren D.H."/>
            <person name="Hwang S.-I."/>
            <person name="Rezaul K."/>
            <person name="Wu L."/>
            <person name="Eng J.K."/>
            <person name="Rodionov V."/>
            <person name="Han D.K."/>
        </authorList>
    </citation>
    <scope>IDENTIFICATION BY MASS SPECTROMETRY [LARGE SCALE ANALYSIS]</scope>
    <source>
        <tissue>Leukemic T-cell</tissue>
    </source>
</reference>
<reference key="11">
    <citation type="journal article" date="2011" name="BMC Struct. Biol.">
        <title>Human Nek6 is a monomeric mostly globular kinase with an unfolded short N-terminal domain.</title>
        <authorList>
            <person name="Meirelles G.V."/>
            <person name="Silva J.C."/>
            <person name="Mendonca Yde A."/>
            <person name="Ramos C.H."/>
            <person name="Torriani I.L."/>
            <person name="Kobarg J."/>
        </authorList>
    </citation>
    <scope>SUBUNIT</scope>
</reference>
<reference key="12">
    <citation type="journal article" date="2007" name="Cell Div.">
        <title>Mitotic regulation by NIMA-related kinases.</title>
        <authorList>
            <person name="O'regan L."/>
            <person name="Blot J."/>
            <person name="Fry A.M."/>
        </authorList>
    </citation>
    <scope>REVIEW</scope>
</reference>
<reference key="13">
    <citation type="journal article" date="2011" name="BMC Syst. Biol.">
        <title>Initial characterization of the human central proteome.</title>
        <authorList>
            <person name="Burkard T.R."/>
            <person name="Planyavsky M."/>
            <person name="Kaupe I."/>
            <person name="Breitwieser F.P."/>
            <person name="Buerckstuemmer T."/>
            <person name="Bennett K.L."/>
            <person name="Superti-Furga G."/>
            <person name="Colinge J."/>
        </authorList>
    </citation>
    <scope>IDENTIFICATION BY MASS SPECTROMETRY [LARGE SCALE ANALYSIS]</scope>
</reference>
<reference key="14">
    <citation type="journal article" date="2013" name="J. Proteome Res.">
        <title>Toward a comprehensive characterization of a human cancer cell phosphoproteome.</title>
        <authorList>
            <person name="Zhou H."/>
            <person name="Di Palma S."/>
            <person name="Preisinger C."/>
            <person name="Peng M."/>
            <person name="Polat A.N."/>
            <person name="Heck A.J."/>
            <person name="Mohammed S."/>
        </authorList>
    </citation>
    <scope>PHOSPHORYLATION [LARGE SCALE ANALYSIS] AT SER-5</scope>
    <scope>IDENTIFICATION BY MASS SPECTROMETRY [LARGE SCALE ANALYSIS]</scope>
    <source>
        <tissue>Erythroleukemia</tissue>
    </source>
</reference>
<reference key="15">
    <citation type="journal article" date="2015" name="Biochem. Biophys. Res. Commun.">
        <title>Anks3 alters the sub-cellular localization of the Nek7 kinase.</title>
        <authorList>
            <person name="Ramachandran H."/>
            <person name="Engel C."/>
            <person name="Mueller B."/>
            <person name="Dengjel J."/>
            <person name="Walz G."/>
            <person name="Yakulov T.A."/>
        </authorList>
    </citation>
    <scope>INTERACTION WITH ANKS3</scope>
</reference>
<reference key="16">
    <citation type="journal article" date="2016" name="Nat. Immunol.">
        <title>NLRP3 activation and mitosis are mutually exclusive events coordinated by NEK7, a new inflammasome component.</title>
        <authorList>
            <person name="Shi H."/>
            <person name="Wang Y."/>
            <person name="Li X."/>
            <person name="Zhan X."/>
            <person name="Tang M."/>
            <person name="Fina M."/>
            <person name="Su L."/>
            <person name="Pratt D."/>
            <person name="Bu C.H."/>
            <person name="Hildebrand S."/>
            <person name="Lyon S."/>
            <person name="Scott L."/>
            <person name="Quan J."/>
            <person name="Sun Q."/>
            <person name="Russell J."/>
            <person name="Arnett S."/>
            <person name="Jurek P."/>
            <person name="Chen D."/>
            <person name="Kravchenko V.V."/>
            <person name="Mathison J.C."/>
            <person name="Moresco E.M."/>
            <person name="Monson N.L."/>
            <person name="Ulevitch R.J."/>
            <person name="Beutler B."/>
        </authorList>
    </citation>
    <scope>FUNCTION</scope>
</reference>
<reference key="17">
    <citation type="journal article" date="2019" name="Sci. Signal.">
        <title>Mitotic phosphorylation by NEK6 and NEK7 reduces the microtubule affinity of EML4 to promote chromosome congression.</title>
        <authorList>
            <person name="Adib R."/>
            <person name="Montgomery J.M."/>
            <person name="Atherton J."/>
            <person name="O'Regan L."/>
            <person name="Richards M.W."/>
            <person name="Straatman K.R."/>
            <person name="Roth D."/>
            <person name="Straube A."/>
            <person name="Bayliss R."/>
            <person name="Moores C.A."/>
            <person name="Fry A.M."/>
        </authorList>
    </citation>
    <scope>FUNCTION</scope>
    <scope>CATALYTIC ACTIVITY</scope>
</reference>
<reference key="18">
    <citation type="journal article" date="2024" name="Mol. Cell">
        <title>Consecutive palmitoylation and phosphorylation orchestrates NLRP3 membrane trafficking and inflammasome activation.</title>
        <authorList>
            <person name="Nie L."/>
            <person name="Fei C."/>
            <person name="Fan Y."/>
            <person name="Dang F."/>
            <person name="Zhao Z."/>
            <person name="Zhu T."/>
            <person name="Wu X."/>
            <person name="Dai T."/>
            <person name="Balasubramanian A."/>
            <person name="Pan J."/>
            <person name="Hu Y."/>
            <person name="Luo H.R."/>
            <person name="Wei W."/>
            <person name="Chen J."/>
        </authorList>
    </citation>
    <scope>FUNCTION</scope>
</reference>
<reference key="19">
    <citation type="journal article" date="2009" name="Mol. Cell">
        <title>An autoinhibitory tyrosine motif in the cell-cycle-regulated Nek7 kinase is released through binding of Nek9.</title>
        <authorList>
            <person name="Richards M.W."/>
            <person name="O'Regan L."/>
            <person name="Mas-Droux C."/>
            <person name="Blot J.M."/>
            <person name="Cheung J."/>
            <person name="Hoelder S."/>
            <person name="Fry A.M."/>
            <person name="Bayliss R."/>
        </authorList>
    </citation>
    <scope>X-RAY CRYSTALLOGRAPHY (2.10 ANGSTROMS) IN COMPLEX WITH ADP</scope>
    <scope>FUNCTION</scope>
    <scope>CATALYTIC ACTIVITY</scope>
    <scope>DOMAIN</scope>
    <scope>ACTIVITY REGULATION</scope>
    <scope>MUTAGENESIS OF TYR-28; LEU-31; ASN-33 AND TYR-97</scope>
</reference>
<reference evidence="29" key="20">
    <citation type="journal article" date="2015" name="Nat. Commun.">
        <title>Mechanistic basis of Nek7 activation through Nek9 binding and induced dimerization.</title>
        <authorList>
            <person name="Haq T."/>
            <person name="Richards M.W."/>
            <person name="Burgess S.G."/>
            <person name="Gallego P."/>
            <person name="Yeoh S."/>
            <person name="O'Regan L."/>
            <person name="Reverter D."/>
            <person name="Roig J."/>
            <person name="Fry A.M."/>
            <person name="Bayliss R."/>
        </authorList>
    </citation>
    <scope>X-RAY CRYSTALLOGRAPHY (2.78 ANGSTROMS) IN COMPLEX WITH NEK9</scope>
    <scope>FUNCTION</scope>
    <scope>CATALYTIC ACTIVITY</scope>
    <scope>ACTIVITY REGULATION</scope>
    <scope>PHOSPHORYLATION AT SER-195</scope>
    <scope>MUTAGENESIS OF ASN-90; LYS-96; TYR-97; MET-122; HIS-125; LYS-130; ARG-131; LEU-132; ARG-155; ILE-169; THR-172; SER-195; ASP-261 AND HIS-262</scope>
</reference>
<reference evidence="30" key="21">
    <citation type="journal article" date="2019" name="Nature">
        <title>Structural mechanism for NEK7-licensed activation of NLRP3 inflammasome.</title>
        <authorList>
            <person name="Sharif H."/>
            <person name="Wang L."/>
            <person name="Wang W.L."/>
            <person name="Magupalli V.G."/>
            <person name="Andreeva L."/>
            <person name="Qiao Q."/>
            <person name="Hauenstein A.V."/>
            <person name="Wu Z."/>
            <person name="Nunez G."/>
            <person name="Mao Y."/>
            <person name="Wu H."/>
        </authorList>
    </citation>
    <scope>STRUCTURE BY ELECTRON MICROSCOPY (3.80 ANGSTROMS) OF 33-302 IN COMPLEX WITH NLRP3</scope>
    <scope>FUNCTION</scope>
    <scope>MUTAGENESIS OF LYS-128; GLN-129; ARG-131; ARG-136; 260-SER--GLU-265; 260-SER-ASP-261; GLU-280; ASP-290 AND ARG-294</scope>
</reference>
<reference key="22">
    <citation type="journal article" date="2022" name="Nature">
        <title>Cryo-EM structures of the active NLRP3 inflammasome disk.</title>
        <authorList>
            <person name="Xiao L."/>
            <person name="Magupalli V.G."/>
            <person name="Wu H."/>
        </authorList>
    </citation>
    <scope>STRUCTURE BY ELECTRON MICROSCOPY (3.3 ANGSTROMS) IN COMPLEX WITH NLRP3</scope>
    <scope>FUNCTION</scope>
    <scope>INTERACTION WITH NLRP3</scope>
</reference>
<reference key="23">
    <citation type="journal article" date="2007" name="Nature">
        <title>Patterns of somatic mutation in human cancer genomes.</title>
        <authorList>
            <person name="Greenman C."/>
            <person name="Stephens P."/>
            <person name="Smith R."/>
            <person name="Dalgliesh G.L."/>
            <person name="Hunter C."/>
            <person name="Bignell G."/>
            <person name="Davies H."/>
            <person name="Teague J."/>
            <person name="Butler A."/>
            <person name="Stevens C."/>
            <person name="Edkins S."/>
            <person name="O'Meara S."/>
            <person name="Vastrik I."/>
            <person name="Schmidt E.E."/>
            <person name="Avis T."/>
            <person name="Barthorpe S."/>
            <person name="Bhamra G."/>
            <person name="Buck G."/>
            <person name="Choudhury B."/>
            <person name="Clements J."/>
            <person name="Cole J."/>
            <person name="Dicks E."/>
            <person name="Forbes S."/>
            <person name="Gray K."/>
            <person name="Halliday K."/>
            <person name="Harrison R."/>
            <person name="Hills K."/>
            <person name="Hinton J."/>
            <person name="Jenkinson A."/>
            <person name="Jones D."/>
            <person name="Menzies A."/>
            <person name="Mironenko T."/>
            <person name="Perry J."/>
            <person name="Raine K."/>
            <person name="Richardson D."/>
            <person name="Shepherd R."/>
            <person name="Small A."/>
            <person name="Tofts C."/>
            <person name="Varian J."/>
            <person name="Webb T."/>
            <person name="West S."/>
            <person name="Widaa S."/>
            <person name="Yates A."/>
            <person name="Cahill D.P."/>
            <person name="Louis D.N."/>
            <person name="Goldstraw P."/>
            <person name="Nicholson A.G."/>
            <person name="Brasseur F."/>
            <person name="Looijenga L."/>
            <person name="Weber B.L."/>
            <person name="Chiew Y.-E."/>
            <person name="DeFazio A."/>
            <person name="Greaves M.F."/>
            <person name="Green A.R."/>
            <person name="Campbell P."/>
            <person name="Birney E."/>
            <person name="Easton D.F."/>
            <person name="Chenevix-Trench G."/>
            <person name="Tan M.-H."/>
            <person name="Khoo S.K."/>
            <person name="Teh B.T."/>
            <person name="Yuen S.T."/>
            <person name="Leung S.Y."/>
            <person name="Wooster R."/>
            <person name="Futreal P.A."/>
            <person name="Stratton M.R."/>
        </authorList>
    </citation>
    <scope>VARIANTS [LARGE SCALE ANALYSIS] GLY-35 AND MET-275</scope>
</reference>
<name>NEK7_HUMAN</name>